<name>AT1A2_PIG</name>
<reference key="1">
    <citation type="submission" date="2009-07" db="EMBL/GenBank/DDBJ databases">
        <title>Cloning of Porcine ATP1A2 mRNA.</title>
        <authorList>
            <person name="Henriksen C."/>
            <person name="Bendixen C."/>
            <person name="Andersen J.P."/>
            <person name="Vilsen B."/>
            <person name="Larsen K."/>
        </authorList>
    </citation>
    <scope>NUCLEOTIDE SEQUENCE [MRNA]</scope>
</reference>
<reference key="2">
    <citation type="submission" date="2009-11" db="EMBL/GenBank/DDBJ databases">
        <authorList>
            <consortium name="Porcine genome sequencing project"/>
        </authorList>
    </citation>
    <scope>NUCLEOTIDE SEQUENCE [LARGE SCALE GENOMIC DNA]</scope>
</reference>
<reference key="3">
    <citation type="journal article" date="2003" name="J. Mol. Biol.">
        <title>The crystallographic structure of Na,K-ATPase N-domain at 2.6A resolution.</title>
        <authorList>
            <person name="Hakansson K.O."/>
        </authorList>
    </citation>
    <scope>X-RAY CRYSTALLOGRAPHY (2.60 ANGSTROMS) OF 384-590</scope>
</reference>
<sequence>MGRGAGREYSPAATTAENGGGKKKQKEKELDELKKEVAMDDHKLSLDELGRKYQVDLSKGLTNQRAQDILARDGPNALTPPPTTPEWVKFCRQLFGGFSILLWIGAILCFLAYGIQAAMEDEPSNDNLYLGVVLAAVVIVTGCFSYYQEAKSSKIMDSFKNMVPQQALVVREGEKMQINAEEVVVGDLVEVKGGDRVPADLRIISSHGCKVDNSSLTGESEPQTRSPEFTHENPLETRNICFFSTNCVEGTARGIVIATGDRTVMGRIATLASGLEVGRTPIAMEIEHFIQLITGVAVFLGVSFFVLSLILGYSWLEAVIFLIGIIVANVPEGLLATVTVCLTLTAKRMARKNCLVKNLEAVETLGSTSTICSDKTGTLTQNRMTVAHMWFDNQIHEADTTEDQSGATFDKRSPTWTALSRIAGLCNRAVFKAGQENISVSKRDTAGDASESALLKCIELSCGSVRKMRDRNPKVAEIPFNSTNKYQLSIHEREDNPQSHVLVMKGAPERILDRCSSILVQGKEIPLDKEMQDAFQNAYLELGGLGERVLGFCQLNLPSGKFPRGFKFDTDELNFPTEKLCFVGLMSMIDPPRAAVPDAVGKCRSAGIKVIMVTGDHPITAKAIAKGVGIISEGNETVEDIAARLNIPVSQVNPREAKACVVHGSDLKDMTSEQLDEILKNHTEIVFARTSPQQKLIIVEGCQRQGAIVAVTGDGVNDSPALKKADIGIAMGIAGSDVSKQAADMILLDDNFASIVTGVEEGRLIFDNLKKSIAYTLTSNIPEITPFLLFIIANIPLPLGTVTILCIDLGTDMVPAISLAYEAAESDIMKRQPRNPQTDKLVNERLISMAYGQIGMIQALGGFFTYFVILAENGFLPSRLLGIRLDWDDRSMNDLEDSYGQEWTYEQRKVVEFTCHTAFFASIVVVQWADLIICKTRRNSVFQQGMKNKILIFGLLEETALAAFLSYCPGMGVALRMYPLKVTWWFCAFPYSLLIFIYDEVRKLILRRYPGGWVEKETYY</sequence>
<proteinExistence type="evidence at protein level"/>
<gene>
    <name type="primary">ATP1A2</name>
</gene>
<keyword id="KW-0002">3D-structure</keyword>
<keyword id="KW-0067">ATP-binding</keyword>
<keyword id="KW-1003">Cell membrane</keyword>
<keyword id="KW-0406">Ion transport</keyword>
<keyword id="KW-0460">Magnesium</keyword>
<keyword id="KW-0472">Membrane</keyword>
<keyword id="KW-0479">Metal-binding</keyword>
<keyword id="KW-0547">Nucleotide-binding</keyword>
<keyword id="KW-0597">Phosphoprotein</keyword>
<keyword id="KW-0630">Potassium</keyword>
<keyword id="KW-0633">Potassium transport</keyword>
<keyword id="KW-1185">Reference proteome</keyword>
<keyword id="KW-0915">Sodium</keyword>
<keyword id="KW-0739">Sodium transport</keyword>
<keyword id="KW-0740">Sodium/potassium transport</keyword>
<keyword id="KW-1278">Translocase</keyword>
<keyword id="KW-0812">Transmembrane</keyword>
<keyword id="KW-1133">Transmembrane helix</keyword>
<keyword id="KW-0813">Transport</keyword>
<feature type="propeptide" id="PRO_0000411080" evidence="1">
    <location>
        <begin position="1"/>
        <end position="5"/>
    </location>
</feature>
<feature type="chain" id="PRO_0000411081" description="Sodium/potassium-transporting ATPase subunit alpha-2">
    <location>
        <begin position="6"/>
        <end position="1020"/>
    </location>
</feature>
<feature type="topological domain" description="Cytoplasmic" evidence="7">
    <location>
        <begin position="6"/>
        <end position="85"/>
    </location>
</feature>
<feature type="transmembrane region" description="Helical" evidence="7">
    <location>
        <begin position="86"/>
        <end position="106"/>
    </location>
</feature>
<feature type="topological domain" description="Extracellular" evidence="7">
    <location>
        <begin position="107"/>
        <end position="129"/>
    </location>
</feature>
<feature type="transmembrane region" description="Helical" evidence="7">
    <location>
        <begin position="130"/>
        <end position="150"/>
    </location>
</feature>
<feature type="topological domain" description="Cytoplasmic" evidence="7">
    <location>
        <begin position="151"/>
        <end position="286"/>
    </location>
</feature>
<feature type="transmembrane region" description="Helical" evidence="7">
    <location>
        <begin position="287"/>
        <end position="306"/>
    </location>
</feature>
<feature type="topological domain" description="Extracellular" evidence="7">
    <location>
        <begin position="307"/>
        <end position="318"/>
    </location>
</feature>
<feature type="transmembrane region" description="Helical" evidence="7">
    <location>
        <begin position="319"/>
        <end position="336"/>
    </location>
</feature>
<feature type="topological domain" description="Cytoplasmic" evidence="7">
    <location>
        <begin position="337"/>
        <end position="769"/>
    </location>
</feature>
<feature type="transmembrane region" description="Helical" evidence="7">
    <location>
        <begin position="770"/>
        <end position="789"/>
    </location>
</feature>
<feature type="topological domain" description="Extracellular" evidence="7">
    <location>
        <begin position="790"/>
        <end position="799"/>
    </location>
</feature>
<feature type="transmembrane region" description="Helical" evidence="7">
    <location>
        <begin position="800"/>
        <end position="820"/>
    </location>
</feature>
<feature type="topological domain" description="Cytoplasmic" evidence="7">
    <location>
        <begin position="821"/>
        <end position="840"/>
    </location>
</feature>
<feature type="transmembrane region" description="Helical" evidence="7">
    <location>
        <begin position="841"/>
        <end position="863"/>
    </location>
</feature>
<feature type="topological domain" description="Extracellular" evidence="7">
    <location>
        <begin position="864"/>
        <end position="915"/>
    </location>
</feature>
<feature type="transmembrane region" description="Helical" evidence="7">
    <location>
        <begin position="916"/>
        <end position="935"/>
    </location>
</feature>
<feature type="topological domain" description="Cytoplasmic" evidence="7">
    <location>
        <begin position="936"/>
        <end position="948"/>
    </location>
</feature>
<feature type="transmembrane region" description="Helical" evidence="7">
    <location>
        <begin position="949"/>
        <end position="967"/>
    </location>
</feature>
<feature type="topological domain" description="Extracellular" evidence="7">
    <location>
        <begin position="968"/>
        <end position="982"/>
    </location>
</feature>
<feature type="transmembrane region" description="Helical" evidence="7">
    <location>
        <begin position="983"/>
        <end position="1003"/>
    </location>
</feature>
<feature type="topological domain" description="Cytoplasmic" evidence="7">
    <location>
        <begin position="1004"/>
        <end position="1020"/>
    </location>
</feature>
<feature type="region of interest" description="Disordered" evidence="8">
    <location>
        <begin position="1"/>
        <end position="31"/>
    </location>
</feature>
<feature type="region of interest" description="Interaction with phosphoinositide-3 kinase" evidence="1">
    <location>
        <begin position="80"/>
        <end position="82"/>
    </location>
</feature>
<feature type="region of interest" description="Disordered" evidence="8">
    <location>
        <begin position="212"/>
        <end position="231"/>
    </location>
</feature>
<feature type="compositionally biased region" description="Polar residues" evidence="8">
    <location>
        <begin position="212"/>
        <end position="227"/>
    </location>
</feature>
<feature type="active site" description="4-aspartylphosphate intermediate" evidence="1">
    <location>
        <position position="374"/>
    </location>
</feature>
<feature type="binding site" evidence="1">
    <location>
        <position position="714"/>
    </location>
    <ligand>
        <name>Mg(2+)</name>
        <dbReference type="ChEBI" id="CHEBI:18420"/>
    </ligand>
</feature>
<feature type="binding site" evidence="1">
    <location>
        <position position="718"/>
    </location>
    <ligand>
        <name>Mg(2+)</name>
        <dbReference type="ChEBI" id="CHEBI:18420"/>
    </ligand>
</feature>
<feature type="modified residue" description="Phosphoserine" evidence="6">
    <location>
        <position position="10"/>
    </location>
</feature>
<feature type="modified residue" description="Phosphoserine" evidence="3">
    <location>
        <position position="439"/>
    </location>
</feature>
<feature type="modified residue" description="Phosphoserine" evidence="6">
    <location>
        <position position="450"/>
    </location>
</feature>
<feature type="modified residue" description="Phosphoserine" evidence="6">
    <location>
        <position position="559"/>
    </location>
</feature>
<feature type="modified residue" description="Phosphothreonine" evidence="5">
    <location>
        <position position="570"/>
    </location>
</feature>
<feature type="modified residue" description="Phosphoserine" evidence="5">
    <location>
        <position position="587"/>
    </location>
</feature>
<feature type="modified residue" description="Phosphoserine" evidence="6">
    <location>
        <position position="672"/>
    </location>
</feature>
<feature type="modified residue" description="Phosphoserine" evidence="4">
    <location>
        <position position="826"/>
    </location>
</feature>
<feature type="modified residue" description="Phosphoserine; by PKA" evidence="1">
    <location>
        <position position="940"/>
    </location>
</feature>
<feature type="strand" evidence="10">
    <location>
        <begin position="385"/>
        <end position="391"/>
    </location>
</feature>
<feature type="strand" evidence="10">
    <location>
        <begin position="394"/>
        <end position="397"/>
    </location>
</feature>
<feature type="helix" evidence="10">
    <location>
        <begin position="414"/>
        <end position="425"/>
    </location>
</feature>
<feature type="helix" evidence="10">
    <location>
        <begin position="449"/>
        <end position="462"/>
    </location>
</feature>
<feature type="helix" evidence="10">
    <location>
        <begin position="465"/>
        <end position="470"/>
    </location>
</feature>
<feature type="strand" evidence="10">
    <location>
        <begin position="474"/>
        <end position="478"/>
    </location>
</feature>
<feature type="strand" evidence="10">
    <location>
        <begin position="487"/>
        <end position="492"/>
    </location>
</feature>
<feature type="strand" evidence="10">
    <location>
        <begin position="499"/>
        <end position="506"/>
    </location>
</feature>
<feature type="helix" evidence="10">
    <location>
        <begin position="508"/>
        <end position="513"/>
    </location>
</feature>
<feature type="strand" evidence="10">
    <location>
        <begin position="515"/>
        <end position="520"/>
    </location>
</feature>
<feature type="strand" evidence="10">
    <location>
        <begin position="523"/>
        <end position="526"/>
    </location>
</feature>
<feature type="helix" evidence="10">
    <location>
        <begin position="529"/>
        <end position="544"/>
    </location>
</feature>
<feature type="strand" evidence="10">
    <location>
        <begin position="548"/>
        <end position="557"/>
    </location>
</feature>
<feature type="turn" evidence="10">
    <location>
        <begin position="559"/>
        <end position="561"/>
    </location>
</feature>
<feature type="turn" evidence="10">
    <location>
        <begin position="570"/>
        <end position="573"/>
    </location>
</feature>
<feature type="strand" evidence="10">
    <location>
        <begin position="578"/>
        <end position="590"/>
    </location>
</feature>
<dbReference type="EC" id="7.2.2.13"/>
<dbReference type="EMBL" id="GQ340776">
    <property type="protein sequence ID" value="ADB19854.1"/>
    <property type="molecule type" value="mRNA"/>
</dbReference>
<dbReference type="EMBL" id="CU138477">
    <property type="status" value="NOT_ANNOTATED_CDS"/>
    <property type="molecule type" value="Genomic_DNA"/>
</dbReference>
<dbReference type="RefSeq" id="NP_001165012.1">
    <property type="nucleotide sequence ID" value="NM_001171541.1"/>
</dbReference>
<dbReference type="RefSeq" id="XP_013852329.1">
    <property type="nucleotide sequence ID" value="XM_013996875.1"/>
</dbReference>
<dbReference type="PDB" id="1Q3I">
    <property type="method" value="X-ray"/>
    <property type="resolution" value="2.60 A"/>
    <property type="chains" value="A=384-590"/>
</dbReference>
<dbReference type="PDBsum" id="1Q3I"/>
<dbReference type="SMR" id="D2WKD8"/>
<dbReference type="FunCoup" id="D2WKD8">
    <property type="interactions" value="249"/>
</dbReference>
<dbReference type="ChEMBL" id="CHEMBL4524015"/>
<dbReference type="DrugCentral" id="D2WKD8"/>
<dbReference type="PaxDb" id="9823-ENSSSCP00000006814"/>
<dbReference type="PeptideAtlas" id="D2WKD8"/>
<dbReference type="Ensembl" id="ENSSSCT00000059508.3">
    <property type="protein sequence ID" value="ENSSSCP00000034217.3"/>
    <property type="gene ID" value="ENSSSCG00000006391.5"/>
</dbReference>
<dbReference type="Ensembl" id="ENSSSCT00015109895.1">
    <property type="protein sequence ID" value="ENSSSCP00015046828.1"/>
    <property type="gene ID" value="ENSSSCG00015079042.1"/>
</dbReference>
<dbReference type="Ensembl" id="ENSSSCT00045028856.1">
    <property type="protein sequence ID" value="ENSSSCP00045019976.1"/>
    <property type="gene ID" value="ENSSSCG00045016895.1"/>
</dbReference>
<dbReference type="Ensembl" id="ENSSSCT00045029077.1">
    <property type="protein sequence ID" value="ENSSSCP00045020133.1"/>
    <property type="gene ID" value="ENSSSCG00045016895.1"/>
</dbReference>
<dbReference type="Ensembl" id="ENSSSCT00070054049.1">
    <property type="protein sequence ID" value="ENSSSCP00070045817.1"/>
    <property type="gene ID" value="ENSSSCG00070026761.1"/>
</dbReference>
<dbReference type="Ensembl" id="ENSSSCT00085048185">
    <property type="protein sequence ID" value="ENSSSCP00085033675"/>
    <property type="gene ID" value="ENSSSCG00085024746"/>
</dbReference>
<dbReference type="Ensembl" id="ENSSSCT00105018030">
    <property type="protein sequence ID" value="ENSSSCP00105012780"/>
    <property type="gene ID" value="ENSSSCG00105008760"/>
</dbReference>
<dbReference type="Ensembl" id="ENSSSCT00110076683">
    <property type="protein sequence ID" value="ENSSSCP00110054124"/>
    <property type="gene ID" value="ENSSSCG00110039915"/>
</dbReference>
<dbReference type="Ensembl" id="ENSSSCT00115030276">
    <property type="protein sequence ID" value="ENSSSCP00115028774"/>
    <property type="gene ID" value="ENSSSCG00115016479"/>
</dbReference>
<dbReference type="Ensembl" id="ENSSSCT00130021202">
    <property type="protein sequence ID" value="ENSSSCP00130014531"/>
    <property type="gene ID" value="ENSSSCG00130011020"/>
</dbReference>
<dbReference type="GeneID" id="396828"/>
<dbReference type="KEGG" id="ssc:396828"/>
<dbReference type="CTD" id="477"/>
<dbReference type="eggNOG" id="KOG0203">
    <property type="taxonomic scope" value="Eukaryota"/>
</dbReference>
<dbReference type="GeneTree" id="ENSGT00940000159936"/>
<dbReference type="HOGENOM" id="CLU_002360_4_3_1"/>
<dbReference type="InParanoid" id="D2WKD8"/>
<dbReference type="OrthoDB" id="3352408at2759"/>
<dbReference type="TreeFam" id="TF312838"/>
<dbReference type="Reactome" id="R-SSC-5578775">
    <property type="pathway name" value="Ion homeostasis"/>
</dbReference>
<dbReference type="Reactome" id="R-SSC-936837">
    <property type="pathway name" value="Ion transport by P-type ATPases"/>
</dbReference>
<dbReference type="EvolutionaryTrace" id="D2WKD8"/>
<dbReference type="Proteomes" id="UP000008227">
    <property type="component" value="Chromosome 4"/>
</dbReference>
<dbReference type="Proteomes" id="UP000314985">
    <property type="component" value="Chromosome 4"/>
</dbReference>
<dbReference type="Proteomes" id="UP000694570">
    <property type="component" value="Unplaced"/>
</dbReference>
<dbReference type="Proteomes" id="UP000694571">
    <property type="component" value="Unplaced"/>
</dbReference>
<dbReference type="Proteomes" id="UP000694720">
    <property type="component" value="Unplaced"/>
</dbReference>
<dbReference type="Proteomes" id="UP000694722">
    <property type="component" value="Unplaced"/>
</dbReference>
<dbReference type="Proteomes" id="UP000694723">
    <property type="component" value="Unplaced"/>
</dbReference>
<dbReference type="Proteomes" id="UP000694724">
    <property type="component" value="Unplaced"/>
</dbReference>
<dbReference type="Proteomes" id="UP000694725">
    <property type="component" value="Unplaced"/>
</dbReference>
<dbReference type="Proteomes" id="UP000694726">
    <property type="component" value="Unplaced"/>
</dbReference>
<dbReference type="Proteomes" id="UP000694727">
    <property type="component" value="Unplaced"/>
</dbReference>
<dbReference type="Proteomes" id="UP000694728">
    <property type="component" value="Unplaced"/>
</dbReference>
<dbReference type="GO" id="GO:0042995">
    <property type="term" value="C:cell projection"/>
    <property type="evidence" value="ECO:0000318"/>
    <property type="project" value="GO_Central"/>
</dbReference>
<dbReference type="GO" id="GO:0005886">
    <property type="term" value="C:plasma membrane"/>
    <property type="evidence" value="ECO:0000318"/>
    <property type="project" value="GO_Central"/>
</dbReference>
<dbReference type="GO" id="GO:0005890">
    <property type="term" value="C:sodium:potassium-exchanging ATPase complex"/>
    <property type="evidence" value="ECO:0000318"/>
    <property type="project" value="GO_Central"/>
</dbReference>
<dbReference type="GO" id="GO:0005524">
    <property type="term" value="F:ATP binding"/>
    <property type="evidence" value="ECO:0007669"/>
    <property type="project" value="UniProtKB-KW"/>
</dbReference>
<dbReference type="GO" id="GO:0016887">
    <property type="term" value="F:ATP hydrolysis activity"/>
    <property type="evidence" value="ECO:0007669"/>
    <property type="project" value="InterPro"/>
</dbReference>
<dbReference type="GO" id="GO:0046872">
    <property type="term" value="F:metal ion binding"/>
    <property type="evidence" value="ECO:0007669"/>
    <property type="project" value="UniProtKB-KW"/>
</dbReference>
<dbReference type="GO" id="GO:0005391">
    <property type="term" value="F:P-type sodium:potassium-exchanging transporter activity"/>
    <property type="evidence" value="ECO:0000318"/>
    <property type="project" value="GO_Central"/>
</dbReference>
<dbReference type="GO" id="GO:0030007">
    <property type="term" value="P:intracellular potassium ion homeostasis"/>
    <property type="evidence" value="ECO:0000318"/>
    <property type="project" value="GO_Central"/>
</dbReference>
<dbReference type="GO" id="GO:0006883">
    <property type="term" value="P:intracellular sodium ion homeostasis"/>
    <property type="evidence" value="ECO:0000318"/>
    <property type="project" value="GO_Central"/>
</dbReference>
<dbReference type="GO" id="GO:1990573">
    <property type="term" value="P:potassium ion import across plasma membrane"/>
    <property type="evidence" value="ECO:0000318"/>
    <property type="project" value="GO_Central"/>
</dbReference>
<dbReference type="GO" id="GO:1902600">
    <property type="term" value="P:proton transmembrane transport"/>
    <property type="evidence" value="ECO:0000318"/>
    <property type="project" value="GO_Central"/>
</dbReference>
<dbReference type="GO" id="GO:0036376">
    <property type="term" value="P:sodium ion export across plasma membrane"/>
    <property type="evidence" value="ECO:0000318"/>
    <property type="project" value="GO_Central"/>
</dbReference>
<dbReference type="CDD" id="cd02608">
    <property type="entry name" value="P-type_ATPase_Na-K_like"/>
    <property type="match status" value="1"/>
</dbReference>
<dbReference type="FunFam" id="2.70.150.10:FF:000142">
    <property type="entry name" value="Na/K ATPase alpha 2 subunit"/>
    <property type="match status" value="1"/>
</dbReference>
<dbReference type="FunFam" id="2.70.150.10:FF:000106">
    <property type="entry name" value="Sodium/potassium-transporting ATPase subunit alpha"/>
    <property type="match status" value="1"/>
</dbReference>
<dbReference type="FunFam" id="3.40.1110.10:FF:000001">
    <property type="entry name" value="Sodium/potassium-transporting ATPase subunit alpha"/>
    <property type="match status" value="1"/>
</dbReference>
<dbReference type="FunFam" id="3.40.50.1000:FF:000004">
    <property type="entry name" value="Sodium/potassium-transporting ATPase subunit alpha"/>
    <property type="match status" value="1"/>
</dbReference>
<dbReference type="FunFam" id="1.20.1110.10:FF:000095">
    <property type="entry name" value="Sodium/potassium-transporting ATPase subunit alpha-1"/>
    <property type="match status" value="2"/>
</dbReference>
<dbReference type="Gene3D" id="3.40.1110.10">
    <property type="entry name" value="Calcium-transporting ATPase, cytoplasmic domain N"/>
    <property type="match status" value="1"/>
</dbReference>
<dbReference type="Gene3D" id="2.70.150.10">
    <property type="entry name" value="Calcium-transporting ATPase, cytoplasmic transduction domain A"/>
    <property type="match status" value="1"/>
</dbReference>
<dbReference type="Gene3D" id="1.20.1110.10">
    <property type="entry name" value="Calcium-transporting ATPase, transmembrane domain"/>
    <property type="match status" value="1"/>
</dbReference>
<dbReference type="Gene3D" id="3.40.50.1000">
    <property type="entry name" value="HAD superfamily/HAD-like"/>
    <property type="match status" value="1"/>
</dbReference>
<dbReference type="InterPro" id="IPR006068">
    <property type="entry name" value="ATPase_P-typ_cation-transptr_C"/>
</dbReference>
<dbReference type="InterPro" id="IPR004014">
    <property type="entry name" value="ATPase_P-typ_cation-transptr_N"/>
</dbReference>
<dbReference type="InterPro" id="IPR023299">
    <property type="entry name" value="ATPase_P-typ_cyto_dom_N"/>
</dbReference>
<dbReference type="InterPro" id="IPR018303">
    <property type="entry name" value="ATPase_P-typ_P_site"/>
</dbReference>
<dbReference type="InterPro" id="IPR023298">
    <property type="entry name" value="ATPase_P-typ_TM_dom_sf"/>
</dbReference>
<dbReference type="InterPro" id="IPR008250">
    <property type="entry name" value="ATPase_P-typ_transduc_dom_A_sf"/>
</dbReference>
<dbReference type="InterPro" id="IPR050510">
    <property type="entry name" value="Cation_transp_ATPase_P-type"/>
</dbReference>
<dbReference type="InterPro" id="IPR036412">
    <property type="entry name" value="HAD-like_sf"/>
</dbReference>
<dbReference type="InterPro" id="IPR023214">
    <property type="entry name" value="HAD_sf"/>
</dbReference>
<dbReference type="InterPro" id="IPR005775">
    <property type="entry name" value="P-type_ATPase_IIC"/>
</dbReference>
<dbReference type="InterPro" id="IPR001757">
    <property type="entry name" value="P_typ_ATPase"/>
</dbReference>
<dbReference type="InterPro" id="IPR044492">
    <property type="entry name" value="P_typ_ATPase_HD_dom"/>
</dbReference>
<dbReference type="NCBIfam" id="TIGR01106">
    <property type="entry name" value="ATPase-IIC_X-K"/>
    <property type="match status" value="1"/>
</dbReference>
<dbReference type="NCBIfam" id="TIGR01494">
    <property type="entry name" value="ATPase_P-type"/>
    <property type="match status" value="2"/>
</dbReference>
<dbReference type="PANTHER" id="PTHR43294">
    <property type="entry name" value="SODIUM/POTASSIUM-TRANSPORTING ATPASE SUBUNIT ALPHA"/>
    <property type="match status" value="1"/>
</dbReference>
<dbReference type="PANTHER" id="PTHR43294:SF6">
    <property type="entry name" value="SODIUM_POTASSIUM-TRANSPORTING ATPASE SUBUNIT ALPHA-2"/>
    <property type="match status" value="1"/>
</dbReference>
<dbReference type="Pfam" id="PF13246">
    <property type="entry name" value="Cation_ATPase"/>
    <property type="match status" value="1"/>
</dbReference>
<dbReference type="Pfam" id="PF00689">
    <property type="entry name" value="Cation_ATPase_C"/>
    <property type="match status" value="1"/>
</dbReference>
<dbReference type="Pfam" id="PF00690">
    <property type="entry name" value="Cation_ATPase_N"/>
    <property type="match status" value="1"/>
</dbReference>
<dbReference type="Pfam" id="PF00122">
    <property type="entry name" value="E1-E2_ATPase"/>
    <property type="match status" value="1"/>
</dbReference>
<dbReference type="Pfam" id="PF00702">
    <property type="entry name" value="Hydrolase"/>
    <property type="match status" value="1"/>
</dbReference>
<dbReference type="PRINTS" id="PR00119">
    <property type="entry name" value="CATATPASE"/>
</dbReference>
<dbReference type="PRINTS" id="PR00121">
    <property type="entry name" value="NAKATPASE"/>
</dbReference>
<dbReference type="SFLD" id="SFLDG00002">
    <property type="entry name" value="C1.7:_P-type_atpase_like"/>
    <property type="match status" value="1"/>
</dbReference>
<dbReference type="SFLD" id="SFLDF00027">
    <property type="entry name" value="p-type_atpase"/>
    <property type="match status" value="1"/>
</dbReference>
<dbReference type="SMART" id="SM00831">
    <property type="entry name" value="Cation_ATPase_N"/>
    <property type="match status" value="1"/>
</dbReference>
<dbReference type="SUPFAM" id="SSF81653">
    <property type="entry name" value="Calcium ATPase, transduction domain A"/>
    <property type="match status" value="1"/>
</dbReference>
<dbReference type="SUPFAM" id="SSF81665">
    <property type="entry name" value="Calcium ATPase, transmembrane domain M"/>
    <property type="match status" value="1"/>
</dbReference>
<dbReference type="SUPFAM" id="SSF56784">
    <property type="entry name" value="HAD-like"/>
    <property type="match status" value="1"/>
</dbReference>
<dbReference type="SUPFAM" id="SSF81660">
    <property type="entry name" value="Metal cation-transporting ATPase, ATP-binding domain N"/>
    <property type="match status" value="1"/>
</dbReference>
<dbReference type="PROSITE" id="PS00154">
    <property type="entry name" value="ATPASE_E1_E2"/>
    <property type="match status" value="1"/>
</dbReference>
<organism>
    <name type="scientific">Sus scrofa</name>
    <name type="common">Pig</name>
    <dbReference type="NCBI Taxonomy" id="9823"/>
    <lineage>
        <taxon>Eukaryota</taxon>
        <taxon>Metazoa</taxon>
        <taxon>Chordata</taxon>
        <taxon>Craniata</taxon>
        <taxon>Vertebrata</taxon>
        <taxon>Euteleostomi</taxon>
        <taxon>Mammalia</taxon>
        <taxon>Eutheria</taxon>
        <taxon>Laurasiatheria</taxon>
        <taxon>Artiodactyla</taxon>
        <taxon>Suina</taxon>
        <taxon>Suidae</taxon>
        <taxon>Sus</taxon>
    </lineage>
</organism>
<evidence type="ECO:0000250" key="1"/>
<evidence type="ECO:0000250" key="2">
    <source>
        <dbReference type="UniProtKB" id="A2VDL6"/>
    </source>
</evidence>
<evidence type="ECO:0000250" key="3">
    <source>
        <dbReference type="UniProtKB" id="P06686"/>
    </source>
</evidence>
<evidence type="ECO:0000250" key="4">
    <source>
        <dbReference type="UniProtKB" id="P09626"/>
    </source>
</evidence>
<evidence type="ECO:0000250" key="5">
    <source>
        <dbReference type="UniProtKB" id="P50993"/>
    </source>
</evidence>
<evidence type="ECO:0000250" key="6">
    <source>
        <dbReference type="UniProtKB" id="Q6PIE5"/>
    </source>
</evidence>
<evidence type="ECO:0000255" key="7"/>
<evidence type="ECO:0000256" key="8">
    <source>
        <dbReference type="SAM" id="MobiDB-lite"/>
    </source>
</evidence>
<evidence type="ECO:0000305" key="9"/>
<evidence type="ECO:0007829" key="10">
    <source>
        <dbReference type="PDB" id="1Q3I"/>
    </source>
</evidence>
<comment type="function">
    <text evidence="1">This is the catalytic component of the active enzyme, which catalyzes the hydrolysis of ATP coupled with the exchange of sodium and potassium ions across the plasma membrane. This action creates the electrochemical gradient of sodium and potassium, providing the energy for active transport of various nutrients (By similarity).</text>
</comment>
<comment type="catalytic activity">
    <reaction>
        <text>K(+)(out) + Na(+)(in) + ATP + H2O = K(+)(in) + Na(+)(out) + ADP + phosphate + H(+)</text>
        <dbReference type="Rhea" id="RHEA:18353"/>
        <dbReference type="ChEBI" id="CHEBI:15377"/>
        <dbReference type="ChEBI" id="CHEBI:15378"/>
        <dbReference type="ChEBI" id="CHEBI:29101"/>
        <dbReference type="ChEBI" id="CHEBI:29103"/>
        <dbReference type="ChEBI" id="CHEBI:30616"/>
        <dbReference type="ChEBI" id="CHEBI:43474"/>
        <dbReference type="ChEBI" id="CHEBI:456216"/>
        <dbReference type="EC" id="7.2.2.13"/>
    </reaction>
</comment>
<comment type="subunit">
    <text evidence="2">The sodium/potassium-transporting ATPase is composed of a catalytic alpha subunit, an auxiliary non-catalytic beta subunit and an additional regulatory subunit. Interacts with regulatory subunit FXYD1.</text>
</comment>
<comment type="subcellular location">
    <subcellularLocation>
        <location evidence="1">Membrane</location>
        <topology evidence="1">Multi-pass membrane protein</topology>
    </subcellularLocation>
    <subcellularLocation>
        <location evidence="1">Cell membrane</location>
        <topology evidence="1">Multi-pass membrane protein</topology>
    </subcellularLocation>
</comment>
<comment type="similarity">
    <text evidence="9">Belongs to the cation transport ATPase (P-type) (TC 3.A.3) family. Type IIC subfamily.</text>
</comment>
<protein>
    <recommendedName>
        <fullName>Sodium/potassium-transporting ATPase subunit alpha-2</fullName>
        <shortName>Na(+)/K(+) ATPase alpha-2 subunit</shortName>
        <ecNumber>7.2.2.13</ecNumber>
    </recommendedName>
    <alternativeName>
        <fullName>Sodium pump subunit alpha-2</fullName>
    </alternativeName>
</protein>
<accession>D2WKD8</accession>